<name>LYS11_PENEN</name>
<accession>A0A0A2J9B0</accession>
<protein>
    <recommendedName>
        <fullName evidence="5">Probable chitinase LysM11</fullName>
        <ecNumber evidence="7">3.2.1.14</ecNumber>
    </recommendedName>
    <alternativeName>
        <fullName evidence="5">LysM domain-containing protein 11</fullName>
    </alternativeName>
    <alternativeName>
        <fullName evidence="5">Non-secreted LysM effector LysM11</fullName>
    </alternativeName>
</protein>
<dbReference type="EC" id="3.2.1.14" evidence="7"/>
<dbReference type="EMBL" id="JQFZ01000275">
    <property type="protein sequence ID" value="KGO51934.1"/>
    <property type="molecule type" value="Genomic_DNA"/>
</dbReference>
<dbReference type="RefSeq" id="XP_016594732.1">
    <property type="nucleotide sequence ID" value="XM_016743667.1"/>
</dbReference>
<dbReference type="SMR" id="A0A0A2J9B0"/>
<dbReference type="STRING" id="27334.A0A0A2J9B0"/>
<dbReference type="GeneID" id="27679087"/>
<dbReference type="VEuPathDB" id="FungiDB:PEXP_093390"/>
<dbReference type="HOGENOM" id="CLU_001482_0_0_1"/>
<dbReference type="Proteomes" id="UP000030143">
    <property type="component" value="Unassembled WGS sequence"/>
</dbReference>
<dbReference type="GO" id="GO:0008061">
    <property type="term" value="F:chitin binding"/>
    <property type="evidence" value="ECO:0007669"/>
    <property type="project" value="UniProtKB-KW"/>
</dbReference>
<dbReference type="GO" id="GO:0008843">
    <property type="term" value="F:endochitinase activity"/>
    <property type="evidence" value="ECO:0007669"/>
    <property type="project" value="UniProtKB-EC"/>
</dbReference>
<dbReference type="GO" id="GO:0006032">
    <property type="term" value="P:chitin catabolic process"/>
    <property type="evidence" value="ECO:0007669"/>
    <property type="project" value="UniProtKB-KW"/>
</dbReference>
<dbReference type="GO" id="GO:0000272">
    <property type="term" value="P:polysaccharide catabolic process"/>
    <property type="evidence" value="ECO:0007669"/>
    <property type="project" value="UniProtKB-KW"/>
</dbReference>
<dbReference type="CDD" id="cd02878">
    <property type="entry name" value="GH18_zymocin_alpha"/>
    <property type="match status" value="1"/>
</dbReference>
<dbReference type="CDD" id="cd00118">
    <property type="entry name" value="LysM"/>
    <property type="match status" value="1"/>
</dbReference>
<dbReference type="Gene3D" id="3.10.50.10">
    <property type="match status" value="1"/>
</dbReference>
<dbReference type="Gene3D" id="3.20.20.80">
    <property type="entry name" value="Glycosidases"/>
    <property type="match status" value="1"/>
</dbReference>
<dbReference type="Gene3D" id="3.10.350.10">
    <property type="entry name" value="LysM domain"/>
    <property type="match status" value="1"/>
</dbReference>
<dbReference type="InterPro" id="IPR011583">
    <property type="entry name" value="Chitinase_II/V-like_cat"/>
</dbReference>
<dbReference type="InterPro" id="IPR029070">
    <property type="entry name" value="Chitinase_insertion_sf"/>
</dbReference>
<dbReference type="InterPro" id="IPR001223">
    <property type="entry name" value="Glyco_hydro18_cat"/>
</dbReference>
<dbReference type="InterPro" id="IPR001579">
    <property type="entry name" value="Glyco_hydro_18_chit_AS"/>
</dbReference>
<dbReference type="InterPro" id="IPR017853">
    <property type="entry name" value="Glycoside_hydrolase_SF"/>
</dbReference>
<dbReference type="InterPro" id="IPR053214">
    <property type="entry name" value="LysM12-like"/>
</dbReference>
<dbReference type="InterPro" id="IPR018392">
    <property type="entry name" value="LysM_dom"/>
</dbReference>
<dbReference type="InterPro" id="IPR036779">
    <property type="entry name" value="LysM_dom_sf"/>
</dbReference>
<dbReference type="PANTHER" id="PTHR47700:SF2">
    <property type="entry name" value="CHITINASE"/>
    <property type="match status" value="1"/>
</dbReference>
<dbReference type="PANTHER" id="PTHR47700">
    <property type="entry name" value="V CHITINASE, PUTATIVE (AFU_ORTHOLOGUE AFUA_6G13720)-RELATED"/>
    <property type="match status" value="1"/>
</dbReference>
<dbReference type="Pfam" id="PF00704">
    <property type="entry name" value="Glyco_hydro_18"/>
    <property type="match status" value="1"/>
</dbReference>
<dbReference type="Pfam" id="PF01476">
    <property type="entry name" value="LysM"/>
    <property type="match status" value="1"/>
</dbReference>
<dbReference type="SMART" id="SM00636">
    <property type="entry name" value="Glyco_18"/>
    <property type="match status" value="1"/>
</dbReference>
<dbReference type="SMART" id="SM00257">
    <property type="entry name" value="LysM"/>
    <property type="match status" value="1"/>
</dbReference>
<dbReference type="SUPFAM" id="SSF51445">
    <property type="entry name" value="(Trans)glycosidases"/>
    <property type="match status" value="1"/>
</dbReference>
<dbReference type="SUPFAM" id="SSF54556">
    <property type="entry name" value="Chitinase insertion domain"/>
    <property type="match status" value="1"/>
</dbReference>
<dbReference type="SUPFAM" id="SSF54106">
    <property type="entry name" value="LysM domain"/>
    <property type="match status" value="1"/>
</dbReference>
<dbReference type="PROSITE" id="PS01095">
    <property type="entry name" value="GH18_1"/>
    <property type="match status" value="1"/>
</dbReference>
<dbReference type="PROSITE" id="PS51910">
    <property type="entry name" value="GH18_2"/>
    <property type="match status" value="1"/>
</dbReference>
<dbReference type="PROSITE" id="PS51782">
    <property type="entry name" value="LYSM"/>
    <property type="match status" value="1"/>
</dbReference>
<comment type="function">
    <text evidence="1 7">Probable chitinase involved in the degradation of chitin, a component of the cell walls of fungi and exoskeletal elements of some animals (including worms and arthropods) (By similarity). Might be involved in manipulation of host defenses for successful infection (Probable).</text>
</comment>
<comment type="catalytic activity">
    <reaction evidence="7">
        <text>Random endo-hydrolysis of N-acetyl-beta-D-glucosaminide (1-&gt;4)-beta-linkages in chitin and chitodextrins.</text>
        <dbReference type="EC" id="3.2.1.14"/>
    </reaction>
</comment>
<comment type="domain">
    <text evidence="7">The LysM (lysin motif) domains are small globular domains involved in binding chitin in eukaryotes. LysM11 contains one LysM domain.</text>
</comment>
<comment type="disruption phenotype">
    <text evidence="4">Leads to enhanced fungal virulence, with faster decaying on infected fruits.</text>
</comment>
<comment type="miscellaneous">
    <text evidence="6">In plants, chitin acts as a microbe-associated molecular pattern (MAMP) that is recognized by lysin motif (LysM)-containing plant cell surface-localized pattern recognition receptors (PRRs) that activate a plethora of downstream immune responses.</text>
</comment>
<comment type="similarity">
    <text evidence="6">Belongs to the glycosyl hydrolase 18 family. Chitinase class V subfamily.</text>
</comment>
<sequence>MKWSNVNSNDSEVVKQSLVVSKSCGASQQTSDITVQVGPAGTIKATKDSSTAIQNLASYMTNAASCGTTILLSKAGDSVAALYAGADVYQSDVGPYLLNFKKQFKAGSQIIQSCDSSSKRDNTIGVYIVNSLDDLEGIDRALQTWSKGSCLDSDGHDLIQSKTTMLGVSEVSKRSDISSSLEGFLAPRAEDNFDKYNTGTDLCKNLKVKQRVCCSAGSLPDIIPKKQSDGTCGTYTIQTNDNCAEIAAHFGVTQDDIYDLNEDTWGWAGCGTNDLKADQVICLSEGNTPMPSPLSNAVCGPQMPDEFCTESPARTKAPGAFQSGKNGCISNCGTYIVNNDDAPENFYHVAYFEVFNLKRECLNMDVNEISDTSLTHVHFAFAGLTADFDVSFDNDEYKAQFEKFVKNDASYKRILSFGGWAESTSASTFQRYRDAVKSGNREKFAKNIKAFFEKYDGLDGIDFDWEYPGATDIPGVPAGSDSDDDNYLGFLKLMKSTIGDKSLSIALPASYWYLKTFPIAKMSDYVSYFIYMTYDLHGQWDYNNAYADVGCPSGDCLRSHVNKTETINSLAMITKAGVPASKIFVGVSSYGRSFGMVDPTCTGPMCKYGGAFDVSTAEAGSCTNTSGYISNAELNLIMQGVDSGASNYKGRTWYDEDSASDVMIYGTKGEITTWVAYMSDDTKEARIDWIKGLNFGGVTDWAIDLQELNLGVDPDSDEAQDLDLPALPTGCSSANWPDNLEDLRNKIDKIDLGCRAQAVVWVLIKILPDILDNYQSAADNYDEYFKYYAEWVRNGIDDSLPLFMWSDGQNYMDCKWSSTSDGSGDAACTEMHVPEGQPGQGEVSITYTVRDEDGFYKALQADYGIEKDWIVWKDIYADPENSLTCPPCPNLTKDCKPCTGHGVTYHNWPVKAADDDIDVPNLKDIIDTAVPNITTLQDVILGSFIEMRIGAMDASDEDVATALSMPVFMIADTTEQMKNITKIGKEQEKADDEAKVSFILDIVSIVLMIIPFAGEAVDAIGGVANVARAAYVVGEAGNAALSVYDIVKNPSSAPFAILGLVMGADASVVGKASKTTFTKAAAFRNALTEDTLSSFSKEFRANDAIVQDIVKACKRA</sequence>
<gene>
    <name evidence="5" type="primary">LysM11</name>
    <name type="ORF">PEX2_063960</name>
</gene>
<feature type="chain" id="PRO_0000460662" description="Probable chitinase LysM11">
    <location>
        <begin position="1"/>
        <end position="1116"/>
    </location>
</feature>
<feature type="domain" description="LysM" evidence="2">
    <location>
        <begin position="233"/>
        <end position="283"/>
    </location>
</feature>
<feature type="domain" description="GH18" evidence="3">
    <location>
        <begin position="346"/>
        <end position="719"/>
    </location>
</feature>
<feature type="active site" description="Proton donor" evidence="3">
    <location>
        <position position="466"/>
    </location>
</feature>
<feature type="binding site" evidence="3">
    <location>
        <position position="467"/>
    </location>
    <ligand>
        <name>chitin</name>
        <dbReference type="ChEBI" id="CHEBI:17029"/>
    </ligand>
</feature>
<feature type="binding site" evidence="3">
    <location>
        <position position="701"/>
    </location>
    <ligand>
        <name>chitin</name>
        <dbReference type="ChEBI" id="CHEBI:17029"/>
    </ligand>
</feature>
<organism>
    <name type="scientific">Penicillium expansum</name>
    <name type="common">Blue mold rot fungus</name>
    <dbReference type="NCBI Taxonomy" id="27334"/>
    <lineage>
        <taxon>Eukaryota</taxon>
        <taxon>Fungi</taxon>
        <taxon>Dikarya</taxon>
        <taxon>Ascomycota</taxon>
        <taxon>Pezizomycotina</taxon>
        <taxon>Eurotiomycetes</taxon>
        <taxon>Eurotiomycetidae</taxon>
        <taxon>Eurotiales</taxon>
        <taxon>Aspergillaceae</taxon>
        <taxon>Penicillium</taxon>
    </lineage>
</organism>
<proteinExistence type="inferred from homology"/>
<evidence type="ECO:0000250" key="1">
    <source>
        <dbReference type="UniProtKB" id="Q873X9"/>
    </source>
</evidence>
<evidence type="ECO:0000255" key="2">
    <source>
        <dbReference type="PROSITE-ProRule" id="PRU01118"/>
    </source>
</evidence>
<evidence type="ECO:0000255" key="3">
    <source>
        <dbReference type="PROSITE-ProRule" id="PRU01258"/>
    </source>
</evidence>
<evidence type="ECO:0000269" key="4">
    <source>
    </source>
</evidence>
<evidence type="ECO:0000303" key="5">
    <source>
    </source>
</evidence>
<evidence type="ECO:0000305" key="6"/>
<evidence type="ECO:0000305" key="7">
    <source>
    </source>
</evidence>
<reference key="1">
    <citation type="journal article" date="2015" name="Mol. Plant Microbe Interact.">
        <title>Genome, transcriptome, and functional analyses of Penicillium expansum provide new insights into secondary metabolism and pathogenicity.</title>
        <authorList>
            <person name="Ballester A.R."/>
            <person name="Marcet-Houben M."/>
            <person name="Levin E."/>
            <person name="Sela N."/>
            <person name="Selma-Lazaro C."/>
            <person name="Carmona L."/>
            <person name="Wisniewski M."/>
            <person name="Droby S."/>
            <person name="Gonzalez-Candelas L."/>
            <person name="Gabaldon T."/>
        </authorList>
    </citation>
    <scope>NUCLEOTIDE SEQUENCE [LARGE SCALE GENOMIC DNA]</scope>
    <source>
        <strain>MD-8</strain>
    </source>
</reference>
<reference key="2">
    <citation type="journal article" date="2020" name="Mol. Genet. Genomics">
        <title>Multiple transcriptomic analyses and characterization of pathogen-related core effectors and LysM family members reveal their differential roles in fungal growth and pathogenicity in Penicillium expansum.</title>
        <authorList>
            <person name="Chen D."/>
            <person name="Li G."/>
            <person name="Liu J."/>
            <person name="Wisniewski M."/>
            <person name="Droby S."/>
            <person name="Levin E."/>
            <person name="Huang S."/>
            <person name="Liu Y."/>
        </authorList>
    </citation>
    <scope>FUNCTION</scope>
    <scope>DISRUPTION PHENOTYPE</scope>
    <scope>DOMAIN</scope>
</reference>
<keyword id="KW-0119">Carbohydrate metabolism</keyword>
<keyword id="KW-0146">Chitin degradation</keyword>
<keyword id="KW-0147">Chitin-binding</keyword>
<keyword id="KW-0326">Glycosidase</keyword>
<keyword id="KW-0378">Hydrolase</keyword>
<keyword id="KW-0624">Polysaccharide degradation</keyword>
<keyword id="KW-1185">Reference proteome</keyword>
<keyword id="KW-0843">Virulence</keyword>